<comment type="function">
    <text evidence="1">Converts 2C-methyl-D-erythritol 2,4-cyclodiphosphate (ME-2,4cPP) into 1-hydroxy-2-methyl-2-(E)-butenyl 4-diphosphate.</text>
</comment>
<comment type="catalytic activity">
    <reaction evidence="1">
        <text>(2E)-4-hydroxy-3-methylbut-2-enyl diphosphate + oxidized [flavodoxin] + H2O + 2 H(+) = 2-C-methyl-D-erythritol 2,4-cyclic diphosphate + reduced [flavodoxin]</text>
        <dbReference type="Rhea" id="RHEA:43604"/>
        <dbReference type="Rhea" id="RHEA-COMP:10622"/>
        <dbReference type="Rhea" id="RHEA-COMP:10623"/>
        <dbReference type="ChEBI" id="CHEBI:15377"/>
        <dbReference type="ChEBI" id="CHEBI:15378"/>
        <dbReference type="ChEBI" id="CHEBI:57618"/>
        <dbReference type="ChEBI" id="CHEBI:58210"/>
        <dbReference type="ChEBI" id="CHEBI:58483"/>
        <dbReference type="ChEBI" id="CHEBI:128753"/>
        <dbReference type="EC" id="1.17.7.3"/>
    </reaction>
</comment>
<comment type="cofactor">
    <cofactor evidence="1">
        <name>[4Fe-4S] cluster</name>
        <dbReference type="ChEBI" id="CHEBI:49883"/>
    </cofactor>
    <text evidence="1">Binds 1 [4Fe-4S] cluster.</text>
</comment>
<comment type="pathway">
    <text evidence="1">Isoprenoid biosynthesis; isopentenyl diphosphate biosynthesis via DXP pathway; isopentenyl diphosphate from 1-deoxy-D-xylulose 5-phosphate: step 5/6.</text>
</comment>
<comment type="similarity">
    <text evidence="1">Belongs to the IspG family.</text>
</comment>
<proteinExistence type="inferred from homology"/>
<protein>
    <recommendedName>
        <fullName evidence="1">4-hydroxy-3-methylbut-2-en-1-yl diphosphate synthase (flavodoxin)</fullName>
        <ecNumber evidence="1">1.17.7.3</ecNumber>
    </recommendedName>
    <alternativeName>
        <fullName evidence="1">1-hydroxy-2-methyl-2-(E)-butenyl 4-diphosphate synthase</fullName>
    </alternativeName>
</protein>
<gene>
    <name evidence="1" type="primary">ispG</name>
    <name type="synonym">gcpE</name>
    <name type="ordered locus">Atu2723</name>
    <name type="ORF">AGR_C_4936</name>
</gene>
<feature type="chain" id="PRO_0000190522" description="4-hydroxy-3-methylbut-2-en-1-yl diphosphate synthase (flavodoxin)">
    <location>
        <begin position="1"/>
        <end position="416"/>
    </location>
</feature>
<feature type="binding site" evidence="1">
    <location>
        <position position="304"/>
    </location>
    <ligand>
        <name>[4Fe-4S] cluster</name>
        <dbReference type="ChEBI" id="CHEBI:49883"/>
    </ligand>
</feature>
<feature type="binding site" evidence="1">
    <location>
        <position position="307"/>
    </location>
    <ligand>
        <name>[4Fe-4S] cluster</name>
        <dbReference type="ChEBI" id="CHEBI:49883"/>
    </ligand>
</feature>
<feature type="binding site" evidence="1">
    <location>
        <position position="350"/>
    </location>
    <ligand>
        <name>[4Fe-4S] cluster</name>
        <dbReference type="ChEBI" id="CHEBI:49883"/>
    </ligand>
</feature>
<feature type="binding site" evidence="1">
    <location>
        <position position="357"/>
    </location>
    <ligand>
        <name>[4Fe-4S] cluster</name>
        <dbReference type="ChEBI" id="CHEBI:49883"/>
    </ligand>
</feature>
<keyword id="KW-0004">4Fe-4S</keyword>
<keyword id="KW-0408">Iron</keyword>
<keyword id="KW-0411">Iron-sulfur</keyword>
<keyword id="KW-0414">Isoprene biosynthesis</keyword>
<keyword id="KW-0479">Metal-binding</keyword>
<keyword id="KW-0560">Oxidoreductase</keyword>
<keyword id="KW-1185">Reference proteome</keyword>
<reference key="1">
    <citation type="journal article" date="2001" name="Science">
        <title>The genome of the natural genetic engineer Agrobacterium tumefaciens C58.</title>
        <authorList>
            <person name="Wood D.W."/>
            <person name="Setubal J.C."/>
            <person name="Kaul R."/>
            <person name="Monks D.E."/>
            <person name="Kitajima J.P."/>
            <person name="Okura V.K."/>
            <person name="Zhou Y."/>
            <person name="Chen L."/>
            <person name="Wood G.E."/>
            <person name="Almeida N.F. Jr."/>
            <person name="Woo L."/>
            <person name="Chen Y."/>
            <person name="Paulsen I.T."/>
            <person name="Eisen J.A."/>
            <person name="Karp P.D."/>
            <person name="Bovee D. Sr."/>
            <person name="Chapman P."/>
            <person name="Clendenning J."/>
            <person name="Deatherage G."/>
            <person name="Gillet W."/>
            <person name="Grant C."/>
            <person name="Kutyavin T."/>
            <person name="Levy R."/>
            <person name="Li M.-J."/>
            <person name="McClelland E."/>
            <person name="Palmieri A."/>
            <person name="Raymond C."/>
            <person name="Rouse G."/>
            <person name="Saenphimmachak C."/>
            <person name="Wu Z."/>
            <person name="Romero P."/>
            <person name="Gordon D."/>
            <person name="Zhang S."/>
            <person name="Yoo H."/>
            <person name="Tao Y."/>
            <person name="Biddle P."/>
            <person name="Jung M."/>
            <person name="Krespan W."/>
            <person name="Perry M."/>
            <person name="Gordon-Kamm B."/>
            <person name="Liao L."/>
            <person name="Kim S."/>
            <person name="Hendrick C."/>
            <person name="Zhao Z.-Y."/>
            <person name="Dolan M."/>
            <person name="Chumley F."/>
            <person name="Tingey S.V."/>
            <person name="Tomb J.-F."/>
            <person name="Gordon M.P."/>
            <person name="Olson M.V."/>
            <person name="Nester E.W."/>
        </authorList>
    </citation>
    <scope>NUCLEOTIDE SEQUENCE [LARGE SCALE GENOMIC DNA]</scope>
    <source>
        <strain>C58 / ATCC 33970</strain>
    </source>
</reference>
<reference key="2">
    <citation type="journal article" date="2001" name="Science">
        <title>Genome sequence of the plant pathogen and biotechnology agent Agrobacterium tumefaciens C58.</title>
        <authorList>
            <person name="Goodner B."/>
            <person name="Hinkle G."/>
            <person name="Gattung S."/>
            <person name="Miller N."/>
            <person name="Blanchard M."/>
            <person name="Qurollo B."/>
            <person name="Goldman B.S."/>
            <person name="Cao Y."/>
            <person name="Askenazi M."/>
            <person name="Halling C."/>
            <person name="Mullin L."/>
            <person name="Houmiel K."/>
            <person name="Gordon J."/>
            <person name="Vaudin M."/>
            <person name="Iartchouk O."/>
            <person name="Epp A."/>
            <person name="Liu F."/>
            <person name="Wollam C."/>
            <person name="Allinger M."/>
            <person name="Doughty D."/>
            <person name="Scott C."/>
            <person name="Lappas C."/>
            <person name="Markelz B."/>
            <person name="Flanagan C."/>
            <person name="Crowell C."/>
            <person name="Gurson J."/>
            <person name="Lomo C."/>
            <person name="Sear C."/>
            <person name="Strub G."/>
            <person name="Cielo C."/>
            <person name="Slater S."/>
        </authorList>
    </citation>
    <scope>NUCLEOTIDE SEQUENCE [LARGE SCALE GENOMIC DNA]</scope>
    <source>
        <strain>C58 / ATCC 33970</strain>
    </source>
</reference>
<accession>P58665</accession>
<evidence type="ECO:0000255" key="1">
    <source>
        <dbReference type="HAMAP-Rule" id="MF_00159"/>
    </source>
</evidence>
<sequence length="416" mass="44873">MNSPADYDPKPRRASVAVDVGGVIVGGGAPVVVQSMTNTDTADIDATVRQVAALFQAGSEMVRITVDRDESAAAVPKIRERLLRLGMDVPLIGDFHYIGHKLLADHPACAEALAKYRINPGNVGFKDKKDKQFGEIVEMAIRYDKPVRIGVNWGSLDQELLTTLMDRNKEQGFPLSARQVTREAIVQSALISAELAEEIGLPRNRIILSAKVSQVQDLIAVYSMLSERSNHALHLGLTEAGMGSKGIVASSAAMGYVLQHGIGDTIRVSLTPEPNGDRTREVQVAQELLQVMGFRQFIPVVAACPGCGRTTSTVFQELAQNIQNDIRKNMPIWREKYPGVEALNVAVMGCIVNGPGESKHADIGISLPGTGESPAAPVFIDGEKALTLRGPNIAADFEALVIDYIEKRFGQKDAAE</sequence>
<dbReference type="EC" id="1.17.7.3" evidence="1"/>
<dbReference type="EMBL" id="AE007869">
    <property type="protein sequence ID" value="AAK88441.2"/>
    <property type="molecule type" value="Genomic_DNA"/>
</dbReference>
<dbReference type="PIR" id="AB2911">
    <property type="entry name" value="AB2911"/>
</dbReference>
<dbReference type="PIR" id="H97685">
    <property type="entry name" value="H97685"/>
</dbReference>
<dbReference type="RefSeq" id="NP_355656.2">
    <property type="nucleotide sequence ID" value="NC_003062.2"/>
</dbReference>
<dbReference type="RefSeq" id="WP_010972519.1">
    <property type="nucleotide sequence ID" value="NC_003062.2"/>
</dbReference>
<dbReference type="SMR" id="P58665"/>
<dbReference type="STRING" id="176299.Atu2723"/>
<dbReference type="DNASU" id="1134761"/>
<dbReference type="EnsemblBacteria" id="AAK88441">
    <property type="protein sequence ID" value="AAK88441"/>
    <property type="gene ID" value="Atu2723"/>
</dbReference>
<dbReference type="GeneID" id="1134761"/>
<dbReference type="KEGG" id="atu:Atu2723"/>
<dbReference type="PATRIC" id="fig|176299.10.peg.2731"/>
<dbReference type="eggNOG" id="COG0821">
    <property type="taxonomic scope" value="Bacteria"/>
</dbReference>
<dbReference type="HOGENOM" id="CLU_042258_1_0_5"/>
<dbReference type="OrthoDB" id="9803214at2"/>
<dbReference type="PhylomeDB" id="P58665"/>
<dbReference type="BioCyc" id="AGRO:ATU2723-MONOMER"/>
<dbReference type="UniPathway" id="UPA00056">
    <property type="reaction ID" value="UER00096"/>
</dbReference>
<dbReference type="Proteomes" id="UP000000813">
    <property type="component" value="Chromosome circular"/>
</dbReference>
<dbReference type="GO" id="GO:0051539">
    <property type="term" value="F:4 iron, 4 sulfur cluster binding"/>
    <property type="evidence" value="ECO:0007669"/>
    <property type="project" value="UniProtKB-UniRule"/>
</dbReference>
<dbReference type="GO" id="GO:0046429">
    <property type="term" value="F:4-hydroxy-3-methylbut-2-en-1-yl diphosphate synthase activity (ferredoxin)"/>
    <property type="evidence" value="ECO:0007669"/>
    <property type="project" value="UniProtKB-UniRule"/>
</dbReference>
<dbReference type="GO" id="GO:0141197">
    <property type="term" value="F:4-hydroxy-3-methylbut-2-enyl-diphosphate synthase activity (flavodoxin)"/>
    <property type="evidence" value="ECO:0007669"/>
    <property type="project" value="UniProtKB-EC"/>
</dbReference>
<dbReference type="GO" id="GO:0005506">
    <property type="term" value="F:iron ion binding"/>
    <property type="evidence" value="ECO:0007669"/>
    <property type="project" value="InterPro"/>
</dbReference>
<dbReference type="GO" id="GO:0019288">
    <property type="term" value="P:isopentenyl diphosphate biosynthetic process, methylerythritol 4-phosphate pathway"/>
    <property type="evidence" value="ECO:0007669"/>
    <property type="project" value="UniProtKB-UniRule"/>
</dbReference>
<dbReference type="GO" id="GO:0016114">
    <property type="term" value="P:terpenoid biosynthetic process"/>
    <property type="evidence" value="ECO:0007669"/>
    <property type="project" value="InterPro"/>
</dbReference>
<dbReference type="FunFam" id="3.30.413.10:FF:000012">
    <property type="entry name" value="4-hydroxy-3-methylbut-2-en-1-yl diphosphate synthase (flavodoxin)"/>
    <property type="match status" value="1"/>
</dbReference>
<dbReference type="Gene3D" id="3.20.20.20">
    <property type="entry name" value="Dihydropteroate synthase-like"/>
    <property type="match status" value="1"/>
</dbReference>
<dbReference type="Gene3D" id="3.30.413.10">
    <property type="entry name" value="Sulfite Reductase Hemoprotein, domain 1"/>
    <property type="match status" value="1"/>
</dbReference>
<dbReference type="HAMAP" id="MF_00159">
    <property type="entry name" value="IspG"/>
    <property type="match status" value="1"/>
</dbReference>
<dbReference type="InterPro" id="IPR011005">
    <property type="entry name" value="Dihydropteroate_synth-like_sf"/>
</dbReference>
<dbReference type="InterPro" id="IPR016425">
    <property type="entry name" value="IspG_bac"/>
</dbReference>
<dbReference type="InterPro" id="IPR004588">
    <property type="entry name" value="IspG_bac-typ"/>
</dbReference>
<dbReference type="InterPro" id="IPR045854">
    <property type="entry name" value="NO2/SO3_Rdtase_4Fe4S_sf"/>
</dbReference>
<dbReference type="NCBIfam" id="TIGR00612">
    <property type="entry name" value="ispG_gcpE"/>
    <property type="match status" value="1"/>
</dbReference>
<dbReference type="NCBIfam" id="NF001540">
    <property type="entry name" value="PRK00366.1"/>
    <property type="match status" value="1"/>
</dbReference>
<dbReference type="PANTHER" id="PTHR30454">
    <property type="entry name" value="4-HYDROXY-3-METHYLBUT-2-EN-1-YL DIPHOSPHATE SYNTHASE"/>
    <property type="match status" value="1"/>
</dbReference>
<dbReference type="PANTHER" id="PTHR30454:SF0">
    <property type="entry name" value="4-HYDROXY-3-METHYLBUT-2-EN-1-YL DIPHOSPHATE SYNTHASE (FERREDOXIN), CHLOROPLASTIC"/>
    <property type="match status" value="1"/>
</dbReference>
<dbReference type="Pfam" id="PF04551">
    <property type="entry name" value="GcpE"/>
    <property type="match status" value="1"/>
</dbReference>
<dbReference type="PIRSF" id="PIRSF004640">
    <property type="entry name" value="IspG"/>
    <property type="match status" value="1"/>
</dbReference>
<dbReference type="SUPFAM" id="SSF56014">
    <property type="entry name" value="Nitrite and sulphite reductase 4Fe-4S domain-like"/>
    <property type="match status" value="1"/>
</dbReference>
<name>ISPG_AGRFC</name>
<organism>
    <name type="scientific">Agrobacterium fabrum (strain C58 / ATCC 33970)</name>
    <name type="common">Agrobacterium tumefaciens (strain C58)</name>
    <dbReference type="NCBI Taxonomy" id="176299"/>
    <lineage>
        <taxon>Bacteria</taxon>
        <taxon>Pseudomonadati</taxon>
        <taxon>Pseudomonadota</taxon>
        <taxon>Alphaproteobacteria</taxon>
        <taxon>Hyphomicrobiales</taxon>
        <taxon>Rhizobiaceae</taxon>
        <taxon>Rhizobium/Agrobacterium group</taxon>
        <taxon>Agrobacterium</taxon>
        <taxon>Agrobacterium tumefaciens complex</taxon>
    </lineage>
</organism>